<reference key="1">
    <citation type="journal article" date="2005" name="J. Bacteriol.">
        <title>Whole-genome sequence analysis of Pseudomonas syringae pv. phaseolicola 1448A reveals divergence among pathovars in genes involved in virulence and transposition.</title>
        <authorList>
            <person name="Joardar V."/>
            <person name="Lindeberg M."/>
            <person name="Jackson R.W."/>
            <person name="Selengut J."/>
            <person name="Dodson R."/>
            <person name="Brinkac L.M."/>
            <person name="Daugherty S.C."/>
            <person name="DeBoy R.T."/>
            <person name="Durkin A.S."/>
            <person name="Gwinn Giglio M."/>
            <person name="Madupu R."/>
            <person name="Nelson W.C."/>
            <person name="Rosovitz M.J."/>
            <person name="Sullivan S.A."/>
            <person name="Crabtree J."/>
            <person name="Creasy T."/>
            <person name="Davidsen T.M."/>
            <person name="Haft D.H."/>
            <person name="Zafar N."/>
            <person name="Zhou L."/>
            <person name="Halpin R."/>
            <person name="Holley T."/>
            <person name="Khouri H.M."/>
            <person name="Feldblyum T.V."/>
            <person name="White O."/>
            <person name="Fraser C.M."/>
            <person name="Chatterjee A.K."/>
            <person name="Cartinhour S."/>
            <person name="Schneider D."/>
            <person name="Mansfield J.W."/>
            <person name="Collmer A."/>
            <person name="Buell R."/>
        </authorList>
    </citation>
    <scope>NUCLEOTIDE SEQUENCE [LARGE SCALE GENOMIC DNA]</scope>
    <source>
        <strain>1448A / Race 6</strain>
    </source>
</reference>
<sequence>MRYPFWRLAVFLAACVAPVWWLYQAWIFALGPDPGKVLVEDFGLATLVMLLITMSMTPLQRLTGWPGWIVVRRQLGLWCFAYVVLHMTMYALFILGLDLGQLGVELVKRPYIIVGALAFLGLLALAVTSNRYSQRRLGARWKKLHRLIYVILGLGLLHMFWIVRADLKEWALYAGIGAFLLLLRIPMITRRIPRLGGSAGTGSKKVQNNG</sequence>
<feature type="chain" id="PRO_1000066179" description="Protein-methionine-sulfoxide reductase heme-binding subunit MsrQ">
    <location>
        <begin position="1"/>
        <end position="210"/>
    </location>
</feature>
<feature type="transmembrane region" description="Helical" evidence="1">
    <location>
        <begin position="8"/>
        <end position="28"/>
    </location>
</feature>
<feature type="transmembrane region" description="Helical" evidence="1">
    <location>
        <begin position="37"/>
        <end position="57"/>
    </location>
</feature>
<feature type="transmembrane region" description="Helical" evidence="1">
    <location>
        <begin position="75"/>
        <end position="95"/>
    </location>
</feature>
<feature type="transmembrane region" description="Helical" evidence="1">
    <location>
        <begin position="110"/>
        <end position="130"/>
    </location>
</feature>
<feature type="transmembrane region" description="Helical" evidence="1">
    <location>
        <begin position="147"/>
        <end position="167"/>
    </location>
</feature>
<feature type="transmembrane region" description="Helical" evidence="1">
    <location>
        <begin position="169"/>
        <end position="189"/>
    </location>
</feature>
<gene>
    <name evidence="1" type="primary">msrQ</name>
    <name type="ordered locus">PSPPH_0877</name>
</gene>
<name>MSRQ_PSE14</name>
<keyword id="KW-0997">Cell inner membrane</keyword>
<keyword id="KW-1003">Cell membrane</keyword>
<keyword id="KW-0249">Electron transport</keyword>
<keyword id="KW-0285">Flavoprotein</keyword>
<keyword id="KW-0288">FMN</keyword>
<keyword id="KW-0349">Heme</keyword>
<keyword id="KW-0408">Iron</keyword>
<keyword id="KW-0472">Membrane</keyword>
<keyword id="KW-0479">Metal-binding</keyword>
<keyword id="KW-0812">Transmembrane</keyword>
<keyword id="KW-1133">Transmembrane helix</keyword>
<keyword id="KW-0813">Transport</keyword>
<protein>
    <recommendedName>
        <fullName evidence="1">Protein-methionine-sulfoxide reductase heme-binding subunit MsrQ</fullName>
    </recommendedName>
    <alternativeName>
        <fullName evidence="1">Flavocytochrome MsrQ</fullName>
    </alternativeName>
</protein>
<evidence type="ECO:0000255" key="1">
    <source>
        <dbReference type="HAMAP-Rule" id="MF_01207"/>
    </source>
</evidence>
<accession>Q48N63</accession>
<organism>
    <name type="scientific">Pseudomonas savastanoi pv. phaseolicola (strain 1448A / Race 6)</name>
    <name type="common">Pseudomonas syringae pv. phaseolicola (strain 1448A / Race 6)</name>
    <dbReference type="NCBI Taxonomy" id="264730"/>
    <lineage>
        <taxon>Bacteria</taxon>
        <taxon>Pseudomonadati</taxon>
        <taxon>Pseudomonadota</taxon>
        <taxon>Gammaproteobacteria</taxon>
        <taxon>Pseudomonadales</taxon>
        <taxon>Pseudomonadaceae</taxon>
        <taxon>Pseudomonas</taxon>
    </lineage>
</organism>
<proteinExistence type="inferred from homology"/>
<dbReference type="EMBL" id="CP000058">
    <property type="protein sequence ID" value="AAZ37848.1"/>
    <property type="molecule type" value="Genomic_DNA"/>
</dbReference>
<dbReference type="RefSeq" id="WP_004658606.1">
    <property type="nucleotide sequence ID" value="NC_005773.3"/>
</dbReference>
<dbReference type="SMR" id="Q48N63"/>
<dbReference type="KEGG" id="psp:PSPPH_0877"/>
<dbReference type="eggNOG" id="COG2717">
    <property type="taxonomic scope" value="Bacteria"/>
</dbReference>
<dbReference type="HOGENOM" id="CLU_080662_0_1_6"/>
<dbReference type="Proteomes" id="UP000000551">
    <property type="component" value="Chromosome"/>
</dbReference>
<dbReference type="GO" id="GO:0005886">
    <property type="term" value="C:plasma membrane"/>
    <property type="evidence" value="ECO:0007669"/>
    <property type="project" value="UniProtKB-SubCell"/>
</dbReference>
<dbReference type="GO" id="GO:0009055">
    <property type="term" value="F:electron transfer activity"/>
    <property type="evidence" value="ECO:0007669"/>
    <property type="project" value="UniProtKB-UniRule"/>
</dbReference>
<dbReference type="GO" id="GO:0010181">
    <property type="term" value="F:FMN binding"/>
    <property type="evidence" value="ECO:0007669"/>
    <property type="project" value="UniProtKB-UniRule"/>
</dbReference>
<dbReference type="GO" id="GO:0020037">
    <property type="term" value="F:heme binding"/>
    <property type="evidence" value="ECO:0007669"/>
    <property type="project" value="UniProtKB-UniRule"/>
</dbReference>
<dbReference type="GO" id="GO:0046872">
    <property type="term" value="F:metal ion binding"/>
    <property type="evidence" value="ECO:0007669"/>
    <property type="project" value="UniProtKB-KW"/>
</dbReference>
<dbReference type="GO" id="GO:0016679">
    <property type="term" value="F:oxidoreductase activity, acting on diphenols and related substances as donors"/>
    <property type="evidence" value="ECO:0007669"/>
    <property type="project" value="TreeGrafter"/>
</dbReference>
<dbReference type="GO" id="GO:0030091">
    <property type="term" value="P:protein repair"/>
    <property type="evidence" value="ECO:0007669"/>
    <property type="project" value="UniProtKB-UniRule"/>
</dbReference>
<dbReference type="HAMAP" id="MF_01207">
    <property type="entry name" value="MsrQ"/>
    <property type="match status" value="1"/>
</dbReference>
<dbReference type="InterPro" id="IPR013130">
    <property type="entry name" value="Fe3_Rdtase_TM_dom"/>
</dbReference>
<dbReference type="InterPro" id="IPR022837">
    <property type="entry name" value="MsrQ-like"/>
</dbReference>
<dbReference type="NCBIfam" id="NF003831">
    <property type="entry name" value="PRK05419.1-2"/>
    <property type="match status" value="1"/>
</dbReference>
<dbReference type="PANTHER" id="PTHR36964">
    <property type="entry name" value="PROTEIN-METHIONINE-SULFOXIDE REDUCTASE HEME-BINDING SUBUNIT MSRQ"/>
    <property type="match status" value="1"/>
</dbReference>
<dbReference type="PANTHER" id="PTHR36964:SF1">
    <property type="entry name" value="PROTEIN-METHIONINE-SULFOXIDE REDUCTASE HEME-BINDING SUBUNIT MSRQ"/>
    <property type="match status" value="1"/>
</dbReference>
<dbReference type="Pfam" id="PF01794">
    <property type="entry name" value="Ferric_reduct"/>
    <property type="match status" value="1"/>
</dbReference>
<comment type="function">
    <text evidence="1">Part of the MsrPQ system that repairs oxidized periplasmic proteins containing methionine sulfoxide residues (Met-O), using respiratory chain electrons. Thus protects these proteins from oxidative-stress damage caused by reactive species of oxygen and chlorine generated by the host defense mechanisms. MsrPQ is essential for the maintenance of envelope integrity under bleach stress, rescuing a wide series of structurally unrelated periplasmic proteins from methionine oxidation. MsrQ provides electrons for reduction to the reductase catalytic subunit MsrP, using the quinone pool of the respiratory chain.</text>
</comment>
<comment type="cofactor">
    <cofactor evidence="1">
        <name>FMN</name>
        <dbReference type="ChEBI" id="CHEBI:58210"/>
    </cofactor>
    <text evidence="1">Binds 1 FMN per subunit.</text>
</comment>
<comment type="cofactor">
    <cofactor evidence="1">
        <name>heme b</name>
        <dbReference type="ChEBI" id="CHEBI:60344"/>
    </cofactor>
    <text evidence="1">Binds 1 heme b (iron(II)-protoporphyrin IX) group per subunit.</text>
</comment>
<comment type="subunit">
    <text evidence="1">Heterodimer of a catalytic subunit (MsrP) and a heme-binding subunit (MsrQ).</text>
</comment>
<comment type="subcellular location">
    <subcellularLocation>
        <location evidence="1">Cell inner membrane</location>
        <topology evidence="1">Multi-pass membrane protein</topology>
    </subcellularLocation>
</comment>
<comment type="similarity">
    <text evidence="1">Belongs to the MsrQ family.</text>
</comment>